<gene>
    <name evidence="1" type="primary">dltC</name>
    <name type="ordered locus">SP70585_2301</name>
</gene>
<evidence type="ECO:0000255" key="1">
    <source>
        <dbReference type="HAMAP-Rule" id="MF_00565"/>
    </source>
</evidence>
<reference key="1">
    <citation type="journal article" date="2010" name="Genome Biol.">
        <title>Structure and dynamics of the pan-genome of Streptococcus pneumoniae and closely related species.</title>
        <authorList>
            <person name="Donati C."/>
            <person name="Hiller N.L."/>
            <person name="Tettelin H."/>
            <person name="Muzzi A."/>
            <person name="Croucher N.J."/>
            <person name="Angiuoli S.V."/>
            <person name="Oggioni M."/>
            <person name="Dunning Hotopp J.C."/>
            <person name="Hu F.Z."/>
            <person name="Riley D.R."/>
            <person name="Covacci A."/>
            <person name="Mitchell T.J."/>
            <person name="Bentley S.D."/>
            <person name="Kilian M."/>
            <person name="Ehrlich G.D."/>
            <person name="Rappuoli R."/>
            <person name="Moxon E.R."/>
            <person name="Masignani V."/>
        </authorList>
    </citation>
    <scope>NUCLEOTIDE SEQUENCE [LARGE SCALE GENOMIC DNA]</scope>
    <source>
        <strain>70585</strain>
    </source>
</reference>
<sequence>MDIKSEVIEIIDELFMEDVSDMMDEDLFDAGVLDSMGTVELIVEIENRFDIRVPVTEFGRDDWNTANKIIAGIVELQNA</sequence>
<protein>
    <recommendedName>
        <fullName evidence="1">D-alanyl carrier protein</fullName>
        <shortName evidence="1">DCP</shortName>
    </recommendedName>
    <alternativeName>
        <fullName evidence="1">D-alanine--poly(phosphoribitol) ligase subunit 2</fullName>
    </alternativeName>
</protein>
<name>DLTC_STRP7</name>
<dbReference type="EMBL" id="CP000918">
    <property type="protein sequence ID" value="ACO15826.1"/>
    <property type="molecule type" value="Genomic_DNA"/>
</dbReference>
<dbReference type="RefSeq" id="WP_000351967.1">
    <property type="nucleotide sequence ID" value="NC_012468.1"/>
</dbReference>
<dbReference type="SMR" id="C1CB19"/>
<dbReference type="GeneID" id="93738863"/>
<dbReference type="KEGG" id="snm:SP70585_2301"/>
<dbReference type="HOGENOM" id="CLU_108696_19_0_9"/>
<dbReference type="UniPathway" id="UPA00556"/>
<dbReference type="Proteomes" id="UP000002211">
    <property type="component" value="Chromosome"/>
</dbReference>
<dbReference type="GO" id="GO:0005737">
    <property type="term" value="C:cytoplasm"/>
    <property type="evidence" value="ECO:0007669"/>
    <property type="project" value="UniProtKB-SubCell"/>
</dbReference>
<dbReference type="GO" id="GO:0036370">
    <property type="term" value="F:D-alanyl carrier activity"/>
    <property type="evidence" value="ECO:0007669"/>
    <property type="project" value="UniProtKB-UniRule"/>
</dbReference>
<dbReference type="GO" id="GO:0071555">
    <property type="term" value="P:cell wall organization"/>
    <property type="evidence" value="ECO:0007669"/>
    <property type="project" value="UniProtKB-KW"/>
</dbReference>
<dbReference type="GO" id="GO:0070395">
    <property type="term" value="P:lipoteichoic acid biosynthetic process"/>
    <property type="evidence" value="ECO:0007669"/>
    <property type="project" value="UniProtKB-UniRule"/>
</dbReference>
<dbReference type="Gene3D" id="1.10.1200.10">
    <property type="entry name" value="ACP-like"/>
    <property type="match status" value="1"/>
</dbReference>
<dbReference type="HAMAP" id="MF_00565">
    <property type="entry name" value="DltC"/>
    <property type="match status" value="1"/>
</dbReference>
<dbReference type="InterPro" id="IPR036736">
    <property type="entry name" value="ACP-like_sf"/>
</dbReference>
<dbReference type="InterPro" id="IPR003230">
    <property type="entry name" value="DltC"/>
</dbReference>
<dbReference type="InterPro" id="IPR009081">
    <property type="entry name" value="PP-bd_ACP"/>
</dbReference>
<dbReference type="NCBIfam" id="TIGR01688">
    <property type="entry name" value="dltC"/>
    <property type="match status" value="1"/>
</dbReference>
<dbReference type="NCBIfam" id="NF003464">
    <property type="entry name" value="PRK05087.1"/>
    <property type="match status" value="1"/>
</dbReference>
<dbReference type="Pfam" id="PF00550">
    <property type="entry name" value="PP-binding"/>
    <property type="match status" value="1"/>
</dbReference>
<dbReference type="SUPFAM" id="SSF47336">
    <property type="entry name" value="ACP-like"/>
    <property type="match status" value="1"/>
</dbReference>
<dbReference type="PROSITE" id="PS50075">
    <property type="entry name" value="CARRIER"/>
    <property type="match status" value="1"/>
</dbReference>
<comment type="function">
    <text evidence="1">Carrier protein involved in the D-alanylation of lipoteichoic acid (LTA). The loading of thioester-linked D-alanine onto DltC is catalyzed by D-alanine--D-alanyl carrier protein ligase DltA. The DltC-carried D-alanyl group is further transferred to cell membrane phosphatidylglycerol (PG) by forming an ester bond, probably catalyzed by DltD. D-alanylation of LTA plays an important role in modulating the properties of the cell wall in Gram-positive bacteria, influencing the net charge of the cell wall.</text>
</comment>
<comment type="pathway">
    <text evidence="1">Cell wall biogenesis; lipoteichoic acid biosynthesis.</text>
</comment>
<comment type="subcellular location">
    <subcellularLocation>
        <location evidence="1">Cytoplasm</location>
    </subcellularLocation>
</comment>
<comment type="PTM">
    <text evidence="1">4'-phosphopantetheine is transferred from CoA to a specific serine of apo-DCP.</text>
</comment>
<comment type="similarity">
    <text evidence="1">Belongs to the DltC family.</text>
</comment>
<proteinExistence type="inferred from homology"/>
<accession>C1CB19</accession>
<feature type="chain" id="PRO_1000146797" description="D-alanyl carrier protein">
    <location>
        <begin position="1"/>
        <end position="79"/>
    </location>
</feature>
<feature type="domain" description="Carrier" evidence="1">
    <location>
        <begin position="1"/>
        <end position="77"/>
    </location>
</feature>
<feature type="modified residue" description="O-(pantetheine 4'-phosphoryl)serine" evidence="1">
    <location>
        <position position="35"/>
    </location>
</feature>
<organism>
    <name type="scientific">Streptococcus pneumoniae (strain 70585)</name>
    <dbReference type="NCBI Taxonomy" id="488221"/>
    <lineage>
        <taxon>Bacteria</taxon>
        <taxon>Bacillati</taxon>
        <taxon>Bacillota</taxon>
        <taxon>Bacilli</taxon>
        <taxon>Lactobacillales</taxon>
        <taxon>Streptococcaceae</taxon>
        <taxon>Streptococcus</taxon>
    </lineage>
</organism>
<keyword id="KW-0961">Cell wall biogenesis/degradation</keyword>
<keyword id="KW-0963">Cytoplasm</keyword>
<keyword id="KW-0596">Phosphopantetheine</keyword>
<keyword id="KW-0597">Phosphoprotein</keyword>